<accession>I0J1J1</accession>
<accession>B3A0L7</accession>
<sequence length="432" mass="47136">MSILKIHAREIFDSRGNPTVEVDLYTKKGLFRAAVPSGASTGIYEALELRDNDKTRYMGKGVKRAVKYINEFLAPALCNQDVTVIEQEKIDKLMLDMDGTENKYKFGANAILGVSLAVCKAGAAEKGVPLYRHIADLAGNPEVILPVPAFNVINGGSHAGNKLAMQEFMILPVGASSFKDAMRIGAEVYHNLKNVIKEKYGKDATNVGDEGGFAPNILENKEALKLLKNAIGKAGYTDKIVIGMDVAASEFYKGGKYDLDFKSPDDPSRYIPSDKLADLYKGFVKDYPVVSIEDPFDQDDWEAWSKFTASTSIQVVGDDLTVTNPKRIAKGVAEKSCNCLLLKVNQIGSVTESLQACKMAQSSGWGVMVSHRSGETEDTLISDLVVGLCTGQIKTGAPCRSERLAKYNQLMRIEEELGAKAKFAGKNFRHPI</sequence>
<comment type="function">
    <text evidence="1">Multifunctional enzyme that, as well as its role in glycolysis, plays a part in various processes such as growth control, hypoxia tolerance and allergic responses.</text>
</comment>
<comment type="catalytic activity">
    <reaction evidence="3">
        <text>(2R)-2-phosphoglycerate = phosphoenolpyruvate + H2O</text>
        <dbReference type="Rhea" id="RHEA:10164"/>
        <dbReference type="ChEBI" id="CHEBI:15377"/>
        <dbReference type="ChEBI" id="CHEBI:58289"/>
        <dbReference type="ChEBI" id="CHEBI:58702"/>
        <dbReference type="EC" id="4.2.1.11"/>
    </reaction>
</comment>
<comment type="cofactor">
    <cofactor evidence="1">
        <name>Mg(2+)</name>
        <dbReference type="ChEBI" id="CHEBI:18420"/>
    </cofactor>
    <text evidence="1">Binds two Mg(2+) per subunit. Required for catalysis and for stabilizing the dimer.</text>
</comment>
<comment type="pathway">
    <text evidence="3">Carbohydrate degradation; glycolysis; pyruvate from D-glyceraldehyde 3-phosphate: step 4/5.</text>
</comment>
<comment type="subunit">
    <text evidence="2">Dimer.</text>
</comment>
<comment type="subcellular location">
    <subcellularLocation>
        <location evidence="3">Cytoplasm</location>
    </subcellularLocation>
</comment>
<comment type="allergen">
    <text evidence="6">Causes an allergic reaction in human. Binds to IgE.</text>
</comment>
<comment type="similarity">
    <text evidence="5">Belongs to the enolase family.</text>
</comment>
<organism>
    <name type="scientific">Thunnus albacares</name>
    <name type="common">Yellowfin tuna</name>
    <name type="synonym">Neothunnus macropterus</name>
    <dbReference type="NCBI Taxonomy" id="8236"/>
    <lineage>
        <taxon>Eukaryota</taxon>
        <taxon>Metazoa</taxon>
        <taxon>Chordata</taxon>
        <taxon>Craniata</taxon>
        <taxon>Vertebrata</taxon>
        <taxon>Euteleostomi</taxon>
        <taxon>Actinopterygii</taxon>
        <taxon>Neopterygii</taxon>
        <taxon>Teleostei</taxon>
        <taxon>Neoteleostei</taxon>
        <taxon>Acanthomorphata</taxon>
        <taxon>Pelagiaria</taxon>
        <taxon>Scombriformes</taxon>
        <taxon>Scombridae</taxon>
        <taxon>Thunnus</taxon>
    </lineage>
</organism>
<protein>
    <recommendedName>
        <fullName evidence="4">Alpha-enolase</fullName>
        <ecNumber evidence="3">4.2.1.11</ecNumber>
    </recommendedName>
    <alternativeName>
        <fullName evidence="4">2-phospho-D-glycerate hydro-lyase</fullName>
    </alternativeName>
    <alternativeName>
        <fullName evidence="4">Enolase 1</fullName>
    </alternativeName>
    <allergenName evidence="7">Thu a 2.0101</allergenName>
</protein>
<reference evidence="9" key="1">
    <citation type="submission" date="2010-04" db="EMBL/GenBank/DDBJ databases">
        <title>Use of new fish allergen in diagnosis of fish allergy.</title>
        <authorList>
            <person name="Kuehn A."/>
            <person name="Hentges F."/>
        </authorList>
    </citation>
    <scope>NUCLEOTIDE SEQUENCE [MRNA]</scope>
    <source>
        <tissue evidence="9">Muscle</tissue>
    </source>
</reference>
<reference evidence="8" key="2">
    <citation type="journal article" date="2013" name="Clin. Exp. Allergy">
        <title>Identification of enolases and aldolases as important fish allergens in cod, salmon and tuna: component resolved diagnosis using parvalbumin and the new allergens.</title>
        <authorList>
            <person name="Kuehn A."/>
            <person name="Hilger C."/>
            <person name="Lehners-Weber C."/>
            <person name="Codreanu-Morel F."/>
            <person name="Morisset M."/>
            <person name="Metz-Favre C."/>
            <person name="Pauli G."/>
            <person name="de Blay F."/>
            <person name="Revets D."/>
            <person name="Muller C.P."/>
            <person name="Vogel L."/>
            <person name="Vieths S."/>
            <person name="Hentges F."/>
        </authorList>
    </citation>
    <scope>PROTEIN SEQUENCE OF 160-174</scope>
    <scope>ALLERGEN</scope>
    <scope>IDENTIFICATION BY MASS SPECTROMETRY</scope>
    <source>
        <tissue evidence="6">Muscle</tissue>
    </source>
</reference>
<dbReference type="EC" id="4.2.1.11" evidence="3"/>
<dbReference type="EMBL" id="FN812740">
    <property type="protein sequence ID" value="CBL79145.1"/>
    <property type="molecule type" value="mRNA"/>
</dbReference>
<dbReference type="SMR" id="I0J1J1"/>
<dbReference type="Allergome" id="10132">
    <property type="allergen name" value="Thu a 2"/>
</dbReference>
<dbReference type="UniPathway" id="UPA00109">
    <property type="reaction ID" value="UER00187"/>
</dbReference>
<dbReference type="GO" id="GO:0000015">
    <property type="term" value="C:phosphopyruvate hydratase complex"/>
    <property type="evidence" value="ECO:0007669"/>
    <property type="project" value="InterPro"/>
</dbReference>
<dbReference type="GO" id="GO:0000287">
    <property type="term" value="F:magnesium ion binding"/>
    <property type="evidence" value="ECO:0007669"/>
    <property type="project" value="InterPro"/>
</dbReference>
<dbReference type="GO" id="GO:0004634">
    <property type="term" value="F:phosphopyruvate hydratase activity"/>
    <property type="evidence" value="ECO:0007669"/>
    <property type="project" value="UniProtKB-EC"/>
</dbReference>
<dbReference type="GO" id="GO:0006096">
    <property type="term" value="P:glycolytic process"/>
    <property type="evidence" value="ECO:0007669"/>
    <property type="project" value="UniProtKB-UniPathway"/>
</dbReference>
<dbReference type="CDD" id="cd03313">
    <property type="entry name" value="enolase"/>
    <property type="match status" value="1"/>
</dbReference>
<dbReference type="FunFam" id="3.30.390.10:FF:000001">
    <property type="entry name" value="Enolase"/>
    <property type="match status" value="1"/>
</dbReference>
<dbReference type="FunFam" id="3.20.20.120:FF:000002">
    <property type="entry name" value="Enolase 1"/>
    <property type="match status" value="1"/>
</dbReference>
<dbReference type="Gene3D" id="3.20.20.120">
    <property type="entry name" value="Enolase-like C-terminal domain"/>
    <property type="match status" value="1"/>
</dbReference>
<dbReference type="Gene3D" id="3.30.390.10">
    <property type="entry name" value="Enolase-like, N-terminal domain"/>
    <property type="match status" value="1"/>
</dbReference>
<dbReference type="HAMAP" id="MF_00318">
    <property type="entry name" value="Enolase"/>
    <property type="match status" value="1"/>
</dbReference>
<dbReference type="InterPro" id="IPR000941">
    <property type="entry name" value="Enolase"/>
</dbReference>
<dbReference type="InterPro" id="IPR036849">
    <property type="entry name" value="Enolase-like_C_sf"/>
</dbReference>
<dbReference type="InterPro" id="IPR029017">
    <property type="entry name" value="Enolase-like_N"/>
</dbReference>
<dbReference type="InterPro" id="IPR020810">
    <property type="entry name" value="Enolase_C"/>
</dbReference>
<dbReference type="InterPro" id="IPR020809">
    <property type="entry name" value="Enolase_CS"/>
</dbReference>
<dbReference type="InterPro" id="IPR020811">
    <property type="entry name" value="Enolase_N"/>
</dbReference>
<dbReference type="NCBIfam" id="TIGR01060">
    <property type="entry name" value="eno"/>
    <property type="match status" value="1"/>
</dbReference>
<dbReference type="PANTHER" id="PTHR11902:SF12">
    <property type="entry name" value="ALPHA-ENOLASE"/>
    <property type="match status" value="1"/>
</dbReference>
<dbReference type="PANTHER" id="PTHR11902">
    <property type="entry name" value="ENOLASE"/>
    <property type="match status" value="1"/>
</dbReference>
<dbReference type="Pfam" id="PF00113">
    <property type="entry name" value="Enolase_C"/>
    <property type="match status" value="1"/>
</dbReference>
<dbReference type="Pfam" id="PF03952">
    <property type="entry name" value="Enolase_N"/>
    <property type="match status" value="1"/>
</dbReference>
<dbReference type="PIRSF" id="PIRSF001400">
    <property type="entry name" value="Enolase"/>
    <property type="match status" value="1"/>
</dbReference>
<dbReference type="PRINTS" id="PR00148">
    <property type="entry name" value="ENOLASE"/>
</dbReference>
<dbReference type="SFLD" id="SFLDS00001">
    <property type="entry name" value="Enolase"/>
    <property type="match status" value="1"/>
</dbReference>
<dbReference type="SFLD" id="SFLDF00002">
    <property type="entry name" value="enolase"/>
    <property type="match status" value="1"/>
</dbReference>
<dbReference type="SMART" id="SM01192">
    <property type="entry name" value="Enolase_C"/>
    <property type="match status" value="1"/>
</dbReference>
<dbReference type="SMART" id="SM01193">
    <property type="entry name" value="Enolase_N"/>
    <property type="match status" value="1"/>
</dbReference>
<dbReference type="SUPFAM" id="SSF51604">
    <property type="entry name" value="Enolase C-terminal domain-like"/>
    <property type="match status" value="1"/>
</dbReference>
<dbReference type="SUPFAM" id="SSF54826">
    <property type="entry name" value="Enolase N-terminal domain-like"/>
    <property type="match status" value="1"/>
</dbReference>
<dbReference type="PROSITE" id="PS00164">
    <property type="entry name" value="ENOLASE"/>
    <property type="match status" value="1"/>
</dbReference>
<proteinExistence type="evidence at protein level"/>
<evidence type="ECO:0000250" key="1"/>
<evidence type="ECO:0000250" key="2">
    <source>
        <dbReference type="UniProtKB" id="B5DGQ7"/>
    </source>
</evidence>
<evidence type="ECO:0000250" key="3">
    <source>
        <dbReference type="UniProtKB" id="P00924"/>
    </source>
</evidence>
<evidence type="ECO:0000250" key="4">
    <source>
        <dbReference type="UniProtKB" id="P04764"/>
    </source>
</evidence>
<evidence type="ECO:0000255" key="5"/>
<evidence type="ECO:0000269" key="6">
    <source>
    </source>
</evidence>
<evidence type="ECO:0000303" key="7">
    <source>
    </source>
</evidence>
<evidence type="ECO:0000305" key="8"/>
<evidence type="ECO:0000312" key="9">
    <source>
        <dbReference type="EMBL" id="CBL79145.1"/>
    </source>
</evidence>
<keyword id="KW-0020">Allergen</keyword>
<keyword id="KW-0963">Cytoplasm</keyword>
<keyword id="KW-0903">Direct protein sequencing</keyword>
<keyword id="KW-0324">Glycolysis</keyword>
<keyword id="KW-0456">Lyase</keyword>
<keyword id="KW-0460">Magnesium</keyword>
<keyword id="KW-0479">Metal-binding</keyword>
<name>ENOA_THUAL</name>
<gene>
    <name evidence="4" type="primary">ENO1</name>
</gene>
<feature type="initiator methionine" description="Removed" evidence="2">
    <location>
        <position position="1"/>
    </location>
</feature>
<feature type="chain" id="PRO_0000425078" description="Alpha-enolase" evidence="3">
    <location>
        <begin position="2"/>
        <end position="432"/>
    </location>
</feature>
<feature type="active site" description="Proton donor" evidence="3">
    <location>
        <position position="210"/>
    </location>
</feature>
<feature type="active site" description="Proton acceptor" evidence="3">
    <location>
        <position position="343"/>
    </location>
</feature>
<feature type="binding site" evidence="1">
    <location>
        <position position="40"/>
    </location>
    <ligand>
        <name>Mg(2+)</name>
        <dbReference type="ChEBI" id="CHEBI:18420"/>
        <label>1</label>
    </ligand>
</feature>
<feature type="binding site" evidence="3">
    <location>
        <position position="158"/>
    </location>
    <ligand>
        <name>substrate</name>
    </ligand>
</feature>
<feature type="binding site" evidence="3">
    <location>
        <position position="167"/>
    </location>
    <ligand>
        <name>substrate</name>
    </ligand>
</feature>
<feature type="binding site" evidence="1">
    <location>
        <position position="245"/>
    </location>
    <ligand>
        <name>Mg(2+)</name>
        <dbReference type="ChEBI" id="CHEBI:18420"/>
        <label>2</label>
    </ligand>
</feature>
<feature type="binding site" evidence="1">
    <location>
        <position position="293"/>
    </location>
    <ligand>
        <name>Mg(2+)</name>
        <dbReference type="ChEBI" id="CHEBI:18420"/>
        <label>2</label>
    </ligand>
</feature>
<feature type="binding site" evidence="3">
    <location>
        <position position="293"/>
    </location>
    <ligand>
        <name>substrate</name>
    </ligand>
</feature>
<feature type="binding site" evidence="1">
    <location>
        <position position="318"/>
    </location>
    <ligand>
        <name>Mg(2+)</name>
        <dbReference type="ChEBI" id="CHEBI:18420"/>
        <label>2</label>
    </ligand>
</feature>
<feature type="binding site" evidence="3">
    <location>
        <position position="318"/>
    </location>
    <ligand>
        <name>substrate</name>
    </ligand>
</feature>
<feature type="binding site" evidence="3">
    <location>
        <begin position="370"/>
        <end position="373"/>
    </location>
    <ligand>
        <name>substrate</name>
    </ligand>
</feature>
<feature type="binding site" evidence="3">
    <location>
        <position position="394"/>
    </location>
    <ligand>
        <name>substrate</name>
    </ligand>
</feature>